<dbReference type="EMBL" id="CR543861">
    <property type="protein sequence ID" value="CAG67348.1"/>
    <property type="molecule type" value="Genomic_DNA"/>
</dbReference>
<dbReference type="RefSeq" id="WP_004920383.1">
    <property type="nucleotide sequence ID" value="NC_005966.1"/>
</dbReference>
<dbReference type="SMR" id="Q6FF10"/>
<dbReference type="GeneID" id="45232903"/>
<dbReference type="KEGG" id="aci:ACIAD0404"/>
<dbReference type="eggNOG" id="COG0239">
    <property type="taxonomic scope" value="Bacteria"/>
</dbReference>
<dbReference type="HOGENOM" id="CLU_114342_3_3_6"/>
<dbReference type="OrthoDB" id="9806299at2"/>
<dbReference type="BioCyc" id="ASP62977:ACIAD_RS01875-MONOMER"/>
<dbReference type="Proteomes" id="UP000000430">
    <property type="component" value="Chromosome"/>
</dbReference>
<dbReference type="GO" id="GO:0005886">
    <property type="term" value="C:plasma membrane"/>
    <property type="evidence" value="ECO:0007669"/>
    <property type="project" value="UniProtKB-SubCell"/>
</dbReference>
<dbReference type="GO" id="GO:0062054">
    <property type="term" value="F:fluoride channel activity"/>
    <property type="evidence" value="ECO:0007669"/>
    <property type="project" value="UniProtKB-UniRule"/>
</dbReference>
<dbReference type="GO" id="GO:0046872">
    <property type="term" value="F:metal ion binding"/>
    <property type="evidence" value="ECO:0007669"/>
    <property type="project" value="UniProtKB-KW"/>
</dbReference>
<dbReference type="GO" id="GO:0140114">
    <property type="term" value="P:cellular detoxification of fluoride"/>
    <property type="evidence" value="ECO:0007669"/>
    <property type="project" value="UniProtKB-UniRule"/>
</dbReference>
<dbReference type="HAMAP" id="MF_00454">
    <property type="entry name" value="FluC"/>
    <property type="match status" value="1"/>
</dbReference>
<dbReference type="InterPro" id="IPR003691">
    <property type="entry name" value="FluC"/>
</dbReference>
<dbReference type="NCBIfam" id="TIGR00494">
    <property type="entry name" value="crcB"/>
    <property type="match status" value="1"/>
</dbReference>
<dbReference type="NCBIfam" id="NF010792">
    <property type="entry name" value="PRK14196.1"/>
    <property type="match status" value="1"/>
</dbReference>
<dbReference type="PANTHER" id="PTHR28259">
    <property type="entry name" value="FLUORIDE EXPORT PROTEIN 1-RELATED"/>
    <property type="match status" value="1"/>
</dbReference>
<dbReference type="PANTHER" id="PTHR28259:SF1">
    <property type="entry name" value="FLUORIDE EXPORT PROTEIN 1-RELATED"/>
    <property type="match status" value="1"/>
</dbReference>
<dbReference type="Pfam" id="PF02537">
    <property type="entry name" value="CRCB"/>
    <property type="match status" value="1"/>
</dbReference>
<protein>
    <recommendedName>
        <fullName evidence="1">Fluoride-specific ion channel FluC</fullName>
    </recommendedName>
</protein>
<reference key="1">
    <citation type="journal article" date="2004" name="Nucleic Acids Res.">
        <title>Unique features revealed by the genome sequence of Acinetobacter sp. ADP1, a versatile and naturally transformation competent bacterium.</title>
        <authorList>
            <person name="Barbe V."/>
            <person name="Vallenet D."/>
            <person name="Fonknechten N."/>
            <person name="Kreimeyer A."/>
            <person name="Oztas S."/>
            <person name="Labarre L."/>
            <person name="Cruveiller S."/>
            <person name="Robert C."/>
            <person name="Duprat S."/>
            <person name="Wincker P."/>
            <person name="Ornston L.N."/>
            <person name="Weissenbach J."/>
            <person name="Marliere P."/>
            <person name="Cohen G.N."/>
            <person name="Medigue C."/>
        </authorList>
    </citation>
    <scope>NUCLEOTIDE SEQUENCE [LARGE SCALE GENOMIC DNA]</scope>
    <source>
        <strain>ATCC 33305 / BD413 / ADP1</strain>
    </source>
</reference>
<name>FLUC_ACIAD</name>
<evidence type="ECO:0000255" key="1">
    <source>
        <dbReference type="HAMAP-Rule" id="MF_00454"/>
    </source>
</evidence>
<organism>
    <name type="scientific">Acinetobacter baylyi (strain ATCC 33305 / BD413 / ADP1)</name>
    <dbReference type="NCBI Taxonomy" id="62977"/>
    <lineage>
        <taxon>Bacteria</taxon>
        <taxon>Pseudomonadati</taxon>
        <taxon>Pseudomonadota</taxon>
        <taxon>Gammaproteobacteria</taxon>
        <taxon>Moraxellales</taxon>
        <taxon>Moraxellaceae</taxon>
        <taxon>Acinetobacter</taxon>
    </lineage>
</organism>
<accession>Q6FF10</accession>
<proteinExistence type="inferred from homology"/>
<comment type="function">
    <text evidence="1">Fluoride-specific ion channel. Important for reducing fluoride concentration in the cell, thus reducing its toxicity.</text>
</comment>
<comment type="catalytic activity">
    <reaction evidence="1">
        <text>fluoride(in) = fluoride(out)</text>
        <dbReference type="Rhea" id="RHEA:76159"/>
        <dbReference type="ChEBI" id="CHEBI:17051"/>
    </reaction>
    <physiologicalReaction direction="left-to-right" evidence="1">
        <dbReference type="Rhea" id="RHEA:76160"/>
    </physiologicalReaction>
</comment>
<comment type="activity regulation">
    <text evidence="1">Na(+) is not transported, but it plays an essential structural role and its presence is essential for fluoride channel function.</text>
</comment>
<comment type="subcellular location">
    <subcellularLocation>
        <location evidence="1">Cell inner membrane</location>
        <topology evidence="1">Multi-pass membrane protein</topology>
    </subcellularLocation>
</comment>
<comment type="similarity">
    <text evidence="1">Belongs to the fluoride channel Fluc/FEX (TC 1.A.43) family.</text>
</comment>
<feature type="chain" id="PRO_0000110033" description="Fluoride-specific ion channel FluC">
    <location>
        <begin position="1"/>
        <end position="126"/>
    </location>
</feature>
<feature type="transmembrane region" description="Helical" evidence="1">
    <location>
        <begin position="4"/>
        <end position="24"/>
    </location>
</feature>
<feature type="transmembrane region" description="Helical" evidence="1">
    <location>
        <begin position="35"/>
        <end position="55"/>
    </location>
</feature>
<feature type="transmembrane region" description="Helical" evidence="1">
    <location>
        <begin position="67"/>
        <end position="87"/>
    </location>
</feature>
<feature type="transmembrane region" description="Helical" evidence="1">
    <location>
        <begin position="97"/>
        <end position="117"/>
    </location>
</feature>
<feature type="binding site" evidence="1">
    <location>
        <position position="74"/>
    </location>
    <ligand>
        <name>Na(+)</name>
        <dbReference type="ChEBI" id="CHEBI:29101"/>
        <note>structural</note>
    </ligand>
</feature>
<feature type="binding site" evidence="1">
    <location>
        <position position="77"/>
    </location>
    <ligand>
        <name>Na(+)</name>
        <dbReference type="ChEBI" id="CHEBI:29101"/>
        <note>structural</note>
    </ligand>
</feature>
<sequence>MYSSLLSIACGAVLGAWLRWFVGLKFNSTFQNFPLGTILVNLVGGFIIGFAIALFANMQLSSNYKLFVITGFCGALTTFSTFSAEVIDLLQQQKYGFAIALITIHLMGSLLCTVLGLLSYQWLSQH</sequence>
<gene>
    <name evidence="1" type="primary">fluC</name>
    <name evidence="1" type="synonym">crcB</name>
    <name type="ordered locus">ACIAD0404</name>
</gene>
<keyword id="KW-0997">Cell inner membrane</keyword>
<keyword id="KW-1003">Cell membrane</keyword>
<keyword id="KW-0407">Ion channel</keyword>
<keyword id="KW-0406">Ion transport</keyword>
<keyword id="KW-0472">Membrane</keyword>
<keyword id="KW-0479">Metal-binding</keyword>
<keyword id="KW-0915">Sodium</keyword>
<keyword id="KW-0812">Transmembrane</keyword>
<keyword id="KW-1133">Transmembrane helix</keyword>
<keyword id="KW-0813">Transport</keyword>